<feature type="chain" id="PRO_1000051138" description="Small ribosomal subunit protein uS19">
    <location>
        <begin position="1"/>
        <end position="91"/>
    </location>
</feature>
<name>RS19_SYNR3</name>
<reference key="1">
    <citation type="submission" date="2006-05" db="EMBL/GenBank/DDBJ databases">
        <authorList>
            <consortium name="Genoscope"/>
        </authorList>
    </citation>
    <scope>NUCLEOTIDE SEQUENCE [LARGE SCALE GENOMIC DNA]</scope>
    <source>
        <strain>RCC307</strain>
    </source>
</reference>
<dbReference type="EMBL" id="CT978603">
    <property type="protein sequence ID" value="CAK29023.1"/>
    <property type="molecule type" value="Genomic_DNA"/>
</dbReference>
<dbReference type="SMR" id="A5GVW4"/>
<dbReference type="STRING" id="316278.SynRCC307_2120"/>
<dbReference type="KEGG" id="syr:SynRCC307_2120"/>
<dbReference type="eggNOG" id="COG0185">
    <property type="taxonomic scope" value="Bacteria"/>
</dbReference>
<dbReference type="HOGENOM" id="CLU_144911_0_1_3"/>
<dbReference type="OrthoDB" id="9797833at2"/>
<dbReference type="Proteomes" id="UP000001115">
    <property type="component" value="Chromosome"/>
</dbReference>
<dbReference type="GO" id="GO:0005737">
    <property type="term" value="C:cytoplasm"/>
    <property type="evidence" value="ECO:0007669"/>
    <property type="project" value="UniProtKB-ARBA"/>
</dbReference>
<dbReference type="GO" id="GO:0015935">
    <property type="term" value="C:small ribosomal subunit"/>
    <property type="evidence" value="ECO:0007669"/>
    <property type="project" value="InterPro"/>
</dbReference>
<dbReference type="GO" id="GO:0019843">
    <property type="term" value="F:rRNA binding"/>
    <property type="evidence" value="ECO:0007669"/>
    <property type="project" value="UniProtKB-UniRule"/>
</dbReference>
<dbReference type="GO" id="GO:0003735">
    <property type="term" value="F:structural constituent of ribosome"/>
    <property type="evidence" value="ECO:0007669"/>
    <property type="project" value="InterPro"/>
</dbReference>
<dbReference type="GO" id="GO:0000028">
    <property type="term" value="P:ribosomal small subunit assembly"/>
    <property type="evidence" value="ECO:0007669"/>
    <property type="project" value="TreeGrafter"/>
</dbReference>
<dbReference type="GO" id="GO:0006412">
    <property type="term" value="P:translation"/>
    <property type="evidence" value="ECO:0007669"/>
    <property type="project" value="UniProtKB-UniRule"/>
</dbReference>
<dbReference type="FunFam" id="3.30.860.10:FF:000001">
    <property type="entry name" value="30S ribosomal protein S19"/>
    <property type="match status" value="1"/>
</dbReference>
<dbReference type="Gene3D" id="3.30.860.10">
    <property type="entry name" value="30s Ribosomal Protein S19, Chain A"/>
    <property type="match status" value="1"/>
</dbReference>
<dbReference type="HAMAP" id="MF_00531">
    <property type="entry name" value="Ribosomal_uS19"/>
    <property type="match status" value="1"/>
</dbReference>
<dbReference type="InterPro" id="IPR002222">
    <property type="entry name" value="Ribosomal_uS19"/>
</dbReference>
<dbReference type="InterPro" id="IPR005732">
    <property type="entry name" value="Ribosomal_uS19_bac-type"/>
</dbReference>
<dbReference type="InterPro" id="IPR020934">
    <property type="entry name" value="Ribosomal_uS19_CS"/>
</dbReference>
<dbReference type="InterPro" id="IPR023575">
    <property type="entry name" value="Ribosomal_uS19_SF"/>
</dbReference>
<dbReference type="NCBIfam" id="TIGR01050">
    <property type="entry name" value="rpsS_bact"/>
    <property type="match status" value="1"/>
</dbReference>
<dbReference type="PANTHER" id="PTHR11880">
    <property type="entry name" value="RIBOSOMAL PROTEIN S19P FAMILY MEMBER"/>
    <property type="match status" value="1"/>
</dbReference>
<dbReference type="PANTHER" id="PTHR11880:SF8">
    <property type="entry name" value="SMALL RIBOSOMAL SUBUNIT PROTEIN US19M"/>
    <property type="match status" value="1"/>
</dbReference>
<dbReference type="Pfam" id="PF00203">
    <property type="entry name" value="Ribosomal_S19"/>
    <property type="match status" value="1"/>
</dbReference>
<dbReference type="PIRSF" id="PIRSF002144">
    <property type="entry name" value="Ribosomal_S19"/>
    <property type="match status" value="1"/>
</dbReference>
<dbReference type="PRINTS" id="PR00975">
    <property type="entry name" value="RIBOSOMALS19"/>
</dbReference>
<dbReference type="SUPFAM" id="SSF54570">
    <property type="entry name" value="Ribosomal protein S19"/>
    <property type="match status" value="1"/>
</dbReference>
<dbReference type="PROSITE" id="PS00323">
    <property type="entry name" value="RIBOSOMAL_S19"/>
    <property type="match status" value="1"/>
</dbReference>
<evidence type="ECO:0000255" key="1">
    <source>
        <dbReference type="HAMAP-Rule" id="MF_00531"/>
    </source>
</evidence>
<evidence type="ECO:0000305" key="2"/>
<protein>
    <recommendedName>
        <fullName evidence="1">Small ribosomal subunit protein uS19</fullName>
    </recommendedName>
    <alternativeName>
        <fullName evidence="2">30S ribosomal protein S19</fullName>
    </alternativeName>
</protein>
<accession>A5GVW4</accession>
<proteinExistence type="inferred from homology"/>
<organism>
    <name type="scientific">Synechococcus sp. (strain RCC307)</name>
    <dbReference type="NCBI Taxonomy" id="316278"/>
    <lineage>
        <taxon>Bacteria</taxon>
        <taxon>Bacillati</taxon>
        <taxon>Cyanobacteriota</taxon>
        <taxon>Cyanophyceae</taxon>
        <taxon>Synechococcales</taxon>
        <taxon>Synechococcaceae</taxon>
        <taxon>Synechococcus</taxon>
    </lineage>
</organism>
<comment type="function">
    <text evidence="1">Protein S19 forms a complex with S13 that binds strongly to the 16S ribosomal RNA.</text>
</comment>
<comment type="similarity">
    <text evidence="1">Belongs to the universal ribosomal protein uS19 family.</text>
</comment>
<keyword id="KW-1185">Reference proteome</keyword>
<keyword id="KW-0687">Ribonucleoprotein</keyword>
<keyword id="KW-0689">Ribosomal protein</keyword>
<keyword id="KW-0694">RNA-binding</keyword>
<keyword id="KW-0699">rRNA-binding</keyword>
<sequence length="91" mass="9972">MGRSLKKGPFVADSLLRKVEKLNAAGEKPVIKTWSRASTILPMMIGHTIAVHNGKAHVPVFVTEQMVGHKLGEFAPTRTFKGHIKDKKGGR</sequence>
<gene>
    <name evidence="1" type="primary">rpsS</name>
    <name evidence="1" type="synonym">rps19</name>
    <name type="ordered locus">SynRCC307_2120</name>
</gene>